<name>FLGI_CHRSD</name>
<accession>Q1QW35</accession>
<proteinExistence type="inferred from homology"/>
<organism>
    <name type="scientific">Chromohalobacter salexigens (strain ATCC BAA-138 / DSM 3043 / CIP 106854 / NCIMB 13768 / 1H11)</name>
    <dbReference type="NCBI Taxonomy" id="290398"/>
    <lineage>
        <taxon>Bacteria</taxon>
        <taxon>Pseudomonadati</taxon>
        <taxon>Pseudomonadota</taxon>
        <taxon>Gammaproteobacteria</taxon>
        <taxon>Oceanospirillales</taxon>
        <taxon>Halomonadaceae</taxon>
        <taxon>Chromohalobacter</taxon>
    </lineage>
</organism>
<protein>
    <recommendedName>
        <fullName evidence="1">Flagellar P-ring protein</fullName>
    </recommendedName>
    <alternativeName>
        <fullName evidence="1">Basal body P-ring protein</fullName>
    </alternativeName>
</protein>
<sequence length="369" mass="38522">MRSLLRWMGVLLLCGLCAAPAQAERIRDLASFAGVRENQLVGYGLVVGLDGTGDQTTQTPFTGQTLINMLSQLGVSIPEGTNMQLRNVAAVMVTAQLPPFARQGQEMDVTVSSMGNADSLRGGTLLMTPLRGVDGNVYAMAQGNLLIGGVGAQQAGSSVQVNHTAAGRIPGGATVEQEVALQLGRADGTLDLYLNESDFTTAQRVVEAINRDFGSPVAAAMDGRLIRLNAPSDSNSRVNFMARIQNLDVTPNQGPAKVIVNSRTGSVVLNREVTLDRAAVAHGNLSVTIDSNPQVSQPNPLGEGETVVVPDADISIQQEGGALQMVNTSADLMDVVNALNALGASPQDLMSILQALKSAGALNAELEII</sequence>
<dbReference type="EMBL" id="CP000285">
    <property type="protein sequence ID" value="ABE59323.1"/>
    <property type="molecule type" value="Genomic_DNA"/>
</dbReference>
<dbReference type="RefSeq" id="WP_011507269.1">
    <property type="nucleotide sequence ID" value="NC_007963.1"/>
</dbReference>
<dbReference type="SMR" id="Q1QW35"/>
<dbReference type="STRING" id="290398.Csal_1971"/>
<dbReference type="GeneID" id="95334688"/>
<dbReference type="KEGG" id="csa:Csal_1971"/>
<dbReference type="eggNOG" id="COG1706">
    <property type="taxonomic scope" value="Bacteria"/>
</dbReference>
<dbReference type="HOGENOM" id="CLU_045235_1_0_6"/>
<dbReference type="OrthoDB" id="9786431at2"/>
<dbReference type="Proteomes" id="UP000000239">
    <property type="component" value="Chromosome"/>
</dbReference>
<dbReference type="GO" id="GO:0009428">
    <property type="term" value="C:bacterial-type flagellum basal body, distal rod, P ring"/>
    <property type="evidence" value="ECO:0007669"/>
    <property type="project" value="InterPro"/>
</dbReference>
<dbReference type="GO" id="GO:0030288">
    <property type="term" value="C:outer membrane-bounded periplasmic space"/>
    <property type="evidence" value="ECO:0007669"/>
    <property type="project" value="InterPro"/>
</dbReference>
<dbReference type="GO" id="GO:0005198">
    <property type="term" value="F:structural molecule activity"/>
    <property type="evidence" value="ECO:0007669"/>
    <property type="project" value="InterPro"/>
</dbReference>
<dbReference type="GO" id="GO:0071973">
    <property type="term" value="P:bacterial-type flagellum-dependent cell motility"/>
    <property type="evidence" value="ECO:0007669"/>
    <property type="project" value="InterPro"/>
</dbReference>
<dbReference type="HAMAP" id="MF_00416">
    <property type="entry name" value="FlgI"/>
    <property type="match status" value="1"/>
</dbReference>
<dbReference type="InterPro" id="IPR001782">
    <property type="entry name" value="Flag_FlgI"/>
</dbReference>
<dbReference type="NCBIfam" id="NF003676">
    <property type="entry name" value="PRK05303.1"/>
    <property type="match status" value="1"/>
</dbReference>
<dbReference type="PANTHER" id="PTHR30381">
    <property type="entry name" value="FLAGELLAR P-RING PERIPLASMIC PROTEIN FLGI"/>
    <property type="match status" value="1"/>
</dbReference>
<dbReference type="PANTHER" id="PTHR30381:SF0">
    <property type="entry name" value="FLAGELLAR P-RING PROTEIN"/>
    <property type="match status" value="1"/>
</dbReference>
<dbReference type="Pfam" id="PF02119">
    <property type="entry name" value="FlgI"/>
    <property type="match status" value="1"/>
</dbReference>
<dbReference type="PRINTS" id="PR01010">
    <property type="entry name" value="FLGPRINGFLGI"/>
</dbReference>
<keyword id="KW-0975">Bacterial flagellum</keyword>
<keyword id="KW-0574">Periplasm</keyword>
<keyword id="KW-1185">Reference proteome</keyword>
<keyword id="KW-0732">Signal</keyword>
<evidence type="ECO:0000255" key="1">
    <source>
        <dbReference type="HAMAP-Rule" id="MF_00416"/>
    </source>
</evidence>
<feature type="signal peptide" evidence="1">
    <location>
        <begin position="1"/>
        <end position="23"/>
    </location>
</feature>
<feature type="chain" id="PRO_5000112826" description="Flagellar P-ring protein">
    <location>
        <begin position="24"/>
        <end position="369"/>
    </location>
</feature>
<comment type="function">
    <text evidence="1">Assembles around the rod to form the L-ring and probably protects the motor/basal body from shearing forces during rotation.</text>
</comment>
<comment type="subunit">
    <text evidence="1">The basal body constitutes a major portion of the flagellar organelle and consists of four rings (L,P,S, and M) mounted on a central rod.</text>
</comment>
<comment type="subcellular location">
    <subcellularLocation>
        <location evidence="1">Periplasm</location>
    </subcellularLocation>
    <subcellularLocation>
        <location evidence="1">Bacterial flagellum basal body</location>
    </subcellularLocation>
</comment>
<comment type="similarity">
    <text evidence="1">Belongs to the FlgI family.</text>
</comment>
<reference key="1">
    <citation type="journal article" date="2011" name="Stand. Genomic Sci.">
        <title>Complete genome sequence of the halophilic and highly halotolerant Chromohalobacter salexigens type strain (1H11(T)).</title>
        <authorList>
            <person name="Copeland A."/>
            <person name="O'Connor K."/>
            <person name="Lucas S."/>
            <person name="Lapidus A."/>
            <person name="Berry K.W."/>
            <person name="Detter J.C."/>
            <person name="Del Rio T.G."/>
            <person name="Hammon N."/>
            <person name="Dalin E."/>
            <person name="Tice H."/>
            <person name="Pitluck S."/>
            <person name="Bruce D."/>
            <person name="Goodwin L."/>
            <person name="Han C."/>
            <person name="Tapia R."/>
            <person name="Saunders E."/>
            <person name="Schmutz J."/>
            <person name="Brettin T."/>
            <person name="Larimer F."/>
            <person name="Land M."/>
            <person name="Hauser L."/>
            <person name="Vargas C."/>
            <person name="Nieto J.J."/>
            <person name="Kyrpides N.C."/>
            <person name="Ivanova N."/>
            <person name="Goker M."/>
            <person name="Klenk H.P."/>
            <person name="Csonka L.N."/>
            <person name="Woyke T."/>
        </authorList>
    </citation>
    <scope>NUCLEOTIDE SEQUENCE [LARGE SCALE GENOMIC DNA]</scope>
    <source>
        <strain>ATCC BAA-138 / DSM 3043 / CIP 106854 / NCIMB 13768 / 1H11</strain>
    </source>
</reference>
<gene>
    <name evidence="1" type="primary">flgI</name>
    <name type="ordered locus">Csal_1971</name>
</gene>